<comment type="function">
    <text evidence="1 4">Part of the third module of ergosterol biosynthesis pathway that includes the late steps of the pathway (By similarity). ERG28 has a role as a scaffold to help anchor the catalytic components of the C-4 demethylation complex ERG25, ERG26 and ERG27 to the endoplasmic reticulum (By similarity). The third module or late pathway involves the ergosterol synthesis itself through consecutive reactions that mainly occur in the endoplasmic reticulum (ER) membrane. Firstly, the squalene synthase ERG9 catalyzes the condensation of 2 farnesyl pyrophosphate moieties to form squalene, which is the precursor of all steroids. Squalene synthase is crucial for balancing the incorporation of farnesyl diphosphate (FPP) into sterol and nonsterol isoprene synthesis. Secondly, the squalene epoxidase ERG1 catalyzes the stereospecific oxidation of squalene to (S)-2,3-epoxysqualene, which is considered to be a rate-limiting enzyme in steroid biosynthesis. Then, the lanosterol synthase ERG7 catalyzes the cyclization of (S)-2,3 oxidosqualene to lanosterol, a reaction that forms the sterol core. In the next steps, lanosterol is transformed to zymosterol through a complex process involving various demethylation, reduction and desaturation reactions. The lanosterol 14-alpha-demethylase ERG11 (also known as CYP51) catalyzes C14-demethylation of lanosterol to produce 4,4'-dimethyl cholesta-8,14,24-triene-3-beta-ol, which is critical for ergosterol biosynthesis. The C-14 reductase ERG24 reduces the C14=C15 double bond of 4,4-dimethyl-cholesta-8,14,24-trienol to produce 4,4-dimethyl-cholesta-8,24-dienol. 4,4-dimethyl-cholesta-8,24-dienol is substrate of the C-4 demethylation complex ERG25-ERG26-ERG27 in which ERG25 catalyzes the three-step monooxygenation required for the demethylation of 4,4-dimethyl and 4alpha-methylsterols, ERG26 catalyzes the oxidative decarboxylation that results in a reduction of the 3-beta-hydroxy group at the C-3 carbon to an oxo group, and ERG27 is responsible for the reduction of the keto group on the C-3. ERG28 has a role as a scaffold to help anchor ERG25, ERG26 and ERG27 to the endoplasmic reticulum and ERG29 regulates the activity of the iron-containing C4-methylsterol oxidase ERG25. Then, the sterol 24-C-methyltransferase ERG6 catalyzes the methyl transfer from S-adenosyl-methionine to the C-24 of zymosterol to form fecosterol. The C-8 sterol isomerase ERG2 catalyzes the reaction which results in unsaturation at C-7 in the B ring of sterols and thus converts fecosterol to episterol. The sterol-C5-desaturase ERG3 then catalyzes the introduction of a C-5 double bond in the B ring to produce 5-dehydroepisterol. The C-22 sterol desaturase ERG5 further converts 5-dehydroepisterol into ergosta-5,7,22,24(28)-tetraen-3beta-ol by forming the C-22(23) double bond in the sterol side chain. Finally, ergosta-5,7,22,24(28)-tetraen-3beta-ol is substrate of the C-24(28) sterol reductase ERG4 to produce ergosterol (Probable).</text>
</comment>
<comment type="subunit">
    <text evidence="1">Heterotetramer of ERG25, ERG26, ERG27 and ERG28. ERG28 acts as a scaffold to tether ERG27 and other 4,4-demethylation-related enzymes, forming a demethylation enzyme complex, in the endoplasmic reticulum. Interacts with ERG25, ERG26 and ERG27. Also interacts with ERG1, ERG3, ERG5, ERG6 and ERG11.</text>
</comment>
<comment type="subcellular location">
    <subcellularLocation>
        <location evidence="1">Endoplasmic reticulum membrane</location>
        <topology evidence="1">Multi-pass membrane protein</topology>
    </subcellularLocation>
</comment>
<comment type="similarity">
    <text evidence="4">Belongs to the ERG28 family.</text>
</comment>
<feature type="chain" id="PRO_0000454177" description="Ergosterol biosynthetic protein 28">
    <location>
        <begin position="1"/>
        <end position="138"/>
    </location>
</feature>
<feature type="transmembrane region" description="Helical" evidence="2">
    <location>
        <begin position="17"/>
        <end position="33"/>
    </location>
</feature>
<feature type="transmembrane region" description="Helical" evidence="2">
    <location>
        <begin position="56"/>
        <end position="75"/>
    </location>
</feature>
<feature type="transmembrane region" description="Helical" evidence="2">
    <location>
        <begin position="87"/>
        <end position="107"/>
    </location>
</feature>
<feature type="transmembrane region" description="Helical" evidence="2">
    <location>
        <begin position="114"/>
        <end position="131"/>
    </location>
</feature>
<feature type="glycosylation site" description="N-linked (GlcNAc...) asparagine" evidence="3">
    <location>
        <position position="40"/>
    </location>
</feature>
<reference key="1">
    <citation type="journal article" date="2004" name="Proc. Natl. Acad. Sci. U.S.A.">
        <title>The diploid genome sequence of Candida albicans.</title>
        <authorList>
            <person name="Jones T."/>
            <person name="Federspiel N.A."/>
            <person name="Chibana H."/>
            <person name="Dungan J."/>
            <person name="Kalman S."/>
            <person name="Magee B.B."/>
            <person name="Newport G."/>
            <person name="Thorstenson Y.R."/>
            <person name="Agabian N."/>
            <person name="Magee P.T."/>
            <person name="Davis R.W."/>
            <person name="Scherer S."/>
        </authorList>
    </citation>
    <scope>NUCLEOTIDE SEQUENCE [LARGE SCALE GENOMIC DNA]</scope>
    <source>
        <strain>SC5314 / ATCC MYA-2876</strain>
    </source>
</reference>
<reference key="2">
    <citation type="journal article" date="2007" name="Genome Biol.">
        <title>Assembly of the Candida albicans genome into sixteen supercontigs aligned on the eight chromosomes.</title>
        <authorList>
            <person name="van het Hoog M."/>
            <person name="Rast T.J."/>
            <person name="Martchenko M."/>
            <person name="Grindle S."/>
            <person name="Dignard D."/>
            <person name="Hogues H."/>
            <person name="Cuomo C."/>
            <person name="Berriman M."/>
            <person name="Scherer S."/>
            <person name="Magee B.B."/>
            <person name="Whiteway M."/>
            <person name="Chibana H."/>
            <person name="Nantel A."/>
            <person name="Magee P.T."/>
        </authorList>
    </citation>
    <scope>GENOME REANNOTATION</scope>
    <source>
        <strain>SC5314 / ATCC MYA-2876</strain>
    </source>
</reference>
<reference key="3">
    <citation type="journal article" date="2013" name="Genome Biol.">
        <title>Assembly of a phased diploid Candida albicans genome facilitates allele-specific measurements and provides a simple model for repeat and indel structure.</title>
        <authorList>
            <person name="Muzzey D."/>
            <person name="Schwartz K."/>
            <person name="Weissman J.S."/>
            <person name="Sherlock G."/>
        </authorList>
    </citation>
    <scope>NUCLEOTIDE SEQUENCE [LARGE SCALE GENOMIC DNA]</scope>
    <scope>GENOME REANNOTATION</scope>
    <source>
        <strain>SC5314 / ATCC MYA-2876</strain>
    </source>
</reference>
<protein>
    <recommendedName>
        <fullName evidence="1">Ergosterol biosynthetic protein 28</fullName>
    </recommendedName>
</protein>
<proteinExistence type="inferred from homology"/>
<name>ERG28_CANAL</name>
<organism>
    <name type="scientific">Candida albicans (strain SC5314 / ATCC MYA-2876)</name>
    <name type="common">Yeast</name>
    <dbReference type="NCBI Taxonomy" id="237561"/>
    <lineage>
        <taxon>Eukaryota</taxon>
        <taxon>Fungi</taxon>
        <taxon>Dikarya</taxon>
        <taxon>Ascomycota</taxon>
        <taxon>Saccharomycotina</taxon>
        <taxon>Pichiomycetes</taxon>
        <taxon>Debaryomycetaceae</taxon>
        <taxon>Candida/Lodderomyces clade</taxon>
        <taxon>Candida</taxon>
    </lineage>
</organism>
<dbReference type="EMBL" id="CP017624">
    <property type="protein sequence ID" value="AOW27158.1"/>
    <property type="molecule type" value="Genomic_DNA"/>
</dbReference>
<dbReference type="RefSeq" id="XP_719465.1">
    <property type="nucleotide sequence ID" value="XM_714372.2"/>
</dbReference>
<dbReference type="FunCoup" id="Q5AD51">
    <property type="interactions" value="275"/>
</dbReference>
<dbReference type="STRING" id="237561.Q5AD51"/>
<dbReference type="GlyCosmos" id="Q5AD51">
    <property type="glycosylation" value="1 site, No reported glycans"/>
</dbReference>
<dbReference type="EnsemblFungi" id="C2_01090C_A-T">
    <property type="protein sequence ID" value="C2_01090C_A-T-p1"/>
    <property type="gene ID" value="C2_01090C_A"/>
</dbReference>
<dbReference type="GeneID" id="3638833"/>
<dbReference type="KEGG" id="cal:CAALFM_C201090CA"/>
<dbReference type="CGD" id="CAL0000184284">
    <property type="gene designation" value="ERG28"/>
</dbReference>
<dbReference type="VEuPathDB" id="FungiDB:C2_01090C_A"/>
<dbReference type="eggNOG" id="KOG3455">
    <property type="taxonomic scope" value="Eukaryota"/>
</dbReference>
<dbReference type="HOGENOM" id="CLU_114589_0_0_1"/>
<dbReference type="InParanoid" id="Q5AD51"/>
<dbReference type="OMA" id="NIAIWTY"/>
<dbReference type="OrthoDB" id="6485510at2759"/>
<dbReference type="Proteomes" id="UP000000559">
    <property type="component" value="Chromosome 2"/>
</dbReference>
<dbReference type="GO" id="GO:0005783">
    <property type="term" value="C:endoplasmic reticulum"/>
    <property type="evidence" value="ECO:0000318"/>
    <property type="project" value="GO_Central"/>
</dbReference>
<dbReference type="GO" id="GO:0005789">
    <property type="term" value="C:endoplasmic reticulum membrane"/>
    <property type="evidence" value="ECO:0007669"/>
    <property type="project" value="UniProtKB-SubCell"/>
</dbReference>
<dbReference type="GO" id="GO:0030674">
    <property type="term" value="F:protein-macromolecule adaptor activity"/>
    <property type="evidence" value="ECO:0000318"/>
    <property type="project" value="GO_Central"/>
</dbReference>
<dbReference type="GO" id="GO:0016126">
    <property type="term" value="P:sterol biosynthetic process"/>
    <property type="evidence" value="ECO:0007669"/>
    <property type="project" value="UniProtKB-KW"/>
</dbReference>
<dbReference type="InterPro" id="IPR005352">
    <property type="entry name" value="Erg28"/>
</dbReference>
<dbReference type="PANTHER" id="PTHR15451:SF19">
    <property type="entry name" value="ERGOSTEROL BIOSYNTHETIC PROTEIN 28 HOMOLOG"/>
    <property type="match status" value="1"/>
</dbReference>
<dbReference type="PANTHER" id="PTHR15451">
    <property type="entry name" value="ERGOSTEROL BIOSYNTHETIC PROTEIN 28-RELATED"/>
    <property type="match status" value="1"/>
</dbReference>
<dbReference type="Pfam" id="PF03694">
    <property type="entry name" value="Erg28"/>
    <property type="match status" value="1"/>
</dbReference>
<gene>
    <name evidence="1" type="primary">ERG28</name>
    <name type="ordered locus">orf19.2016</name>
    <name type="ORF">CAALFM_C201090CA</name>
</gene>
<accession>Q5AD51</accession>
<evidence type="ECO:0000250" key="1">
    <source>
        <dbReference type="UniProtKB" id="P40030"/>
    </source>
</evidence>
<evidence type="ECO:0000255" key="2"/>
<evidence type="ECO:0000255" key="3">
    <source>
        <dbReference type="PROSITE-ProRule" id="PRU00498"/>
    </source>
</evidence>
<evidence type="ECO:0000305" key="4"/>
<keyword id="KW-0256">Endoplasmic reticulum</keyword>
<keyword id="KW-0325">Glycoprotein</keyword>
<keyword id="KW-0444">Lipid biosynthesis</keyword>
<keyword id="KW-0443">Lipid metabolism</keyword>
<keyword id="KW-0472">Membrane</keyword>
<keyword id="KW-1185">Reference proteome</keyword>
<keyword id="KW-0752">Steroid biosynthesis</keyword>
<keyword id="KW-0753">Steroid metabolism</keyword>
<keyword id="KW-0756">Sterol biosynthesis</keyword>
<keyword id="KW-1207">Sterol metabolism</keyword>
<keyword id="KW-0812">Transmembrane</keyword>
<keyword id="KW-1133">Transmembrane helix</keyword>
<sequence length="138" mass="16033">MLGYFESILPYTNGGKLPYWLLFISVVSIFNSVQTYQNINLTKRVYEKNPNQVSPLSARTFGTWTLITSIVRFYGAYYLQNKQIYELTQFTFAIAAWHFLSEWLYFGTCKLGKGLSGPLIVSSVSLVWMYLQKDFYVN</sequence>